<accession>P86887</accession>
<gene>
    <name type="primary">hbb2</name>
</gene>
<keyword id="KW-0349">Heme</keyword>
<keyword id="KW-0408">Iron</keyword>
<keyword id="KW-0479">Metal-binding</keyword>
<keyword id="KW-0561">Oxygen transport</keyword>
<keyword id="KW-0813">Transport</keyword>
<sequence length="146" mass="16067">VKWTDKERAVILGIFSGLDYEDIGPKALVRCLIVYPWTQRYFGAFGNLSSAAAISGNLKIAAHGVKVLHGLDMALQHMDNIMETYADLSILHSETLHVDPDNFKLLADCLTITIAAKMGHCFTPDTQIAFHKFLAVVVSALGKQYC</sequence>
<feature type="chain" id="PRO_0000419014" description="Hemoglobin subunit beta-2">
    <location>
        <begin position="1"/>
        <end position="146"/>
    </location>
</feature>
<feature type="domain" description="Globin" evidence="2">
    <location>
        <begin position="2"/>
        <end position="146"/>
    </location>
</feature>
<feature type="binding site" description="distal binding residue" evidence="1 2">
    <location>
        <position position="63"/>
    </location>
    <ligand>
        <name>heme b</name>
        <dbReference type="ChEBI" id="CHEBI:60344"/>
    </ligand>
    <ligandPart>
        <name>Fe</name>
        <dbReference type="ChEBI" id="CHEBI:18248"/>
    </ligandPart>
</feature>
<feature type="binding site" description="proximal binding residue" evidence="1 2">
    <location>
        <position position="92"/>
    </location>
    <ligand>
        <name>heme b</name>
        <dbReference type="ChEBI" id="CHEBI:60344"/>
    </ligand>
    <ligandPart>
        <name>Fe</name>
        <dbReference type="ChEBI" id="CHEBI:18248"/>
    </ligandPart>
</feature>
<evidence type="ECO:0000250" key="1">
    <source>
        <dbReference type="UniProtKB" id="P02070"/>
    </source>
</evidence>
<evidence type="ECO:0000255" key="2">
    <source>
        <dbReference type="PROSITE-ProRule" id="PRU00238"/>
    </source>
</evidence>
<evidence type="ECO:0000269" key="3">
    <source>
    </source>
</evidence>
<evidence type="ECO:0000303" key="4">
    <source>
    </source>
</evidence>
<evidence type="ECO:0000305" key="5"/>
<name>HBB2_LYCRE</name>
<reference evidence="5" key="1">
    <citation type="journal article" date="2011" name="IUBMB Life">
        <title>Polymerization of hemoglobins in Arctic fish: Lycodes reticulatus and Gadus morhua.</title>
        <authorList>
            <person name="Riccio A."/>
            <person name="Mangiapia G."/>
            <person name="Giordano D."/>
            <person name="Flagiello A."/>
            <person name="Tedesco R."/>
            <person name="Bruno S."/>
            <person name="Vergara A."/>
            <person name="Mazzarella L."/>
            <person name="di Prisco G."/>
            <person name="Pucci P."/>
            <person name="Paduano L."/>
            <person name="Verde C."/>
        </authorList>
    </citation>
    <scope>NUCLEOTIDE SEQUENCE [MRNA]</scope>
    <scope>FUNCTION</scope>
    <scope>SUBUNIT</scope>
    <scope>MASS SPECTROMETRY</scope>
    <source>
        <tissue evidence="3">Blood</tissue>
    </source>
</reference>
<dbReference type="SMR" id="P86887"/>
<dbReference type="GO" id="GO:0072562">
    <property type="term" value="C:blood microparticle"/>
    <property type="evidence" value="ECO:0007669"/>
    <property type="project" value="TreeGrafter"/>
</dbReference>
<dbReference type="GO" id="GO:0031838">
    <property type="term" value="C:haptoglobin-hemoglobin complex"/>
    <property type="evidence" value="ECO:0007669"/>
    <property type="project" value="TreeGrafter"/>
</dbReference>
<dbReference type="GO" id="GO:0005833">
    <property type="term" value="C:hemoglobin complex"/>
    <property type="evidence" value="ECO:0000250"/>
    <property type="project" value="UniProtKB"/>
</dbReference>
<dbReference type="GO" id="GO:0031720">
    <property type="term" value="F:haptoglobin binding"/>
    <property type="evidence" value="ECO:0007669"/>
    <property type="project" value="TreeGrafter"/>
</dbReference>
<dbReference type="GO" id="GO:0020037">
    <property type="term" value="F:heme binding"/>
    <property type="evidence" value="ECO:0007669"/>
    <property type="project" value="InterPro"/>
</dbReference>
<dbReference type="GO" id="GO:0046872">
    <property type="term" value="F:metal ion binding"/>
    <property type="evidence" value="ECO:0007669"/>
    <property type="project" value="UniProtKB-KW"/>
</dbReference>
<dbReference type="GO" id="GO:0043177">
    <property type="term" value="F:organic acid binding"/>
    <property type="evidence" value="ECO:0007669"/>
    <property type="project" value="TreeGrafter"/>
</dbReference>
<dbReference type="GO" id="GO:0019825">
    <property type="term" value="F:oxygen binding"/>
    <property type="evidence" value="ECO:0007669"/>
    <property type="project" value="InterPro"/>
</dbReference>
<dbReference type="GO" id="GO:0005344">
    <property type="term" value="F:oxygen carrier activity"/>
    <property type="evidence" value="ECO:0000250"/>
    <property type="project" value="UniProtKB"/>
</dbReference>
<dbReference type="GO" id="GO:0004601">
    <property type="term" value="F:peroxidase activity"/>
    <property type="evidence" value="ECO:0007669"/>
    <property type="project" value="TreeGrafter"/>
</dbReference>
<dbReference type="GO" id="GO:0042744">
    <property type="term" value="P:hydrogen peroxide catabolic process"/>
    <property type="evidence" value="ECO:0007669"/>
    <property type="project" value="TreeGrafter"/>
</dbReference>
<dbReference type="GO" id="GO:0015671">
    <property type="term" value="P:oxygen transport"/>
    <property type="evidence" value="ECO:0000250"/>
    <property type="project" value="UniProtKB"/>
</dbReference>
<dbReference type="CDD" id="cd08925">
    <property type="entry name" value="Hb-beta-like"/>
    <property type="match status" value="1"/>
</dbReference>
<dbReference type="FunFam" id="1.10.490.10:FF:000001">
    <property type="entry name" value="Hemoglobin subunit beta"/>
    <property type="match status" value="1"/>
</dbReference>
<dbReference type="Gene3D" id="1.10.490.10">
    <property type="entry name" value="Globins"/>
    <property type="match status" value="1"/>
</dbReference>
<dbReference type="InterPro" id="IPR000971">
    <property type="entry name" value="Globin"/>
</dbReference>
<dbReference type="InterPro" id="IPR009050">
    <property type="entry name" value="Globin-like_sf"/>
</dbReference>
<dbReference type="InterPro" id="IPR012292">
    <property type="entry name" value="Globin/Proto"/>
</dbReference>
<dbReference type="InterPro" id="IPR002337">
    <property type="entry name" value="Hemoglobin_b"/>
</dbReference>
<dbReference type="InterPro" id="IPR050056">
    <property type="entry name" value="Hemoglobin_oxygen_transport"/>
</dbReference>
<dbReference type="PANTHER" id="PTHR11442">
    <property type="entry name" value="HEMOGLOBIN FAMILY MEMBER"/>
    <property type="match status" value="1"/>
</dbReference>
<dbReference type="PANTHER" id="PTHR11442:SF7">
    <property type="entry name" value="HEMOGLOBIN SUBUNIT EPSILON"/>
    <property type="match status" value="1"/>
</dbReference>
<dbReference type="Pfam" id="PF00042">
    <property type="entry name" value="Globin"/>
    <property type="match status" value="1"/>
</dbReference>
<dbReference type="PRINTS" id="PR00814">
    <property type="entry name" value="BETAHAEM"/>
</dbReference>
<dbReference type="SUPFAM" id="SSF46458">
    <property type="entry name" value="Globin-like"/>
    <property type="match status" value="1"/>
</dbReference>
<dbReference type="PROSITE" id="PS01033">
    <property type="entry name" value="GLOBIN"/>
    <property type="match status" value="1"/>
</dbReference>
<comment type="function">
    <text evidence="1 3">Involved in oxygen transport from gills to the various peripheral tissues.</text>
</comment>
<comment type="subunit">
    <text evidence="4">Heterotetramer of two alpha chains and two beta chains.</text>
</comment>
<comment type="tissue specificity">
    <text evidence="5">Red blood cells.</text>
</comment>
<comment type="mass spectrometry" mass="16067.4" error="0.6" method="MALDI" evidence="3"/>
<comment type="miscellaneous">
    <text evidence="3">This fish has just a single hemoglobin. It displays a weak Bohr effect that is not effector-enhanced and shows a propensity to form disulfide-linked polymers in vitro.</text>
</comment>
<comment type="similarity">
    <text evidence="2">Belongs to the globin family.</text>
</comment>
<protein>
    <recommendedName>
        <fullName evidence="4">Hemoglobin subunit beta-2</fullName>
    </recommendedName>
    <alternativeName>
        <fullName>Beta-2-globin</fullName>
    </alternativeName>
    <alternativeName>
        <fullName>Hemoglobin beta-2 chain</fullName>
    </alternativeName>
</protein>
<proteinExistence type="evidence at protein level"/>
<organism>
    <name type="scientific">Lycodes reticulatus</name>
    <name type="common">Arctic eelpout</name>
    <dbReference type="NCBI Taxonomy" id="215418"/>
    <lineage>
        <taxon>Eukaryota</taxon>
        <taxon>Metazoa</taxon>
        <taxon>Chordata</taxon>
        <taxon>Craniata</taxon>
        <taxon>Vertebrata</taxon>
        <taxon>Euteleostomi</taxon>
        <taxon>Actinopterygii</taxon>
        <taxon>Neopterygii</taxon>
        <taxon>Teleostei</taxon>
        <taxon>Neoteleostei</taxon>
        <taxon>Acanthomorphata</taxon>
        <taxon>Eupercaria</taxon>
        <taxon>Perciformes</taxon>
        <taxon>Cottioidei</taxon>
        <taxon>Zoarcales</taxon>
        <taxon>Zoarcidae</taxon>
        <taxon>Lycodinae</taxon>
        <taxon>Lycodes</taxon>
    </lineage>
</organism>